<comment type="function">
    <text evidence="1">This is one of the proteins that binds to the 5S RNA in the ribosome where it forms part of the central protuberance.</text>
</comment>
<comment type="subunit">
    <text evidence="1">Part of the 50S ribosomal subunit; part of the 5S rRNA/L5/L18/L25 subcomplex. Contacts the 5S rRNA. Binds to the 5S rRNA independently of L5 and L18.</text>
</comment>
<comment type="similarity">
    <text evidence="1">Belongs to the bacterial ribosomal protein bL25 family.</text>
</comment>
<proteinExistence type="inferred from homology"/>
<accession>A1JLN0</accession>
<reference key="1">
    <citation type="journal article" date="2006" name="PLoS Genet.">
        <title>The complete genome sequence and comparative genome analysis of the high pathogenicity Yersinia enterocolitica strain 8081.</title>
        <authorList>
            <person name="Thomson N.R."/>
            <person name="Howard S."/>
            <person name="Wren B.W."/>
            <person name="Holden M.T.G."/>
            <person name="Crossman L."/>
            <person name="Challis G.L."/>
            <person name="Churcher C."/>
            <person name="Mungall K."/>
            <person name="Brooks K."/>
            <person name="Chillingworth T."/>
            <person name="Feltwell T."/>
            <person name="Abdellah Z."/>
            <person name="Hauser H."/>
            <person name="Jagels K."/>
            <person name="Maddison M."/>
            <person name="Moule S."/>
            <person name="Sanders M."/>
            <person name="Whitehead S."/>
            <person name="Quail M.A."/>
            <person name="Dougan G."/>
            <person name="Parkhill J."/>
            <person name="Prentice M.B."/>
        </authorList>
    </citation>
    <scope>NUCLEOTIDE SEQUENCE [LARGE SCALE GENOMIC DNA]</scope>
    <source>
        <strain>NCTC 13174 / 8081</strain>
    </source>
</reference>
<evidence type="ECO:0000255" key="1">
    <source>
        <dbReference type="HAMAP-Rule" id="MF_01336"/>
    </source>
</evidence>
<evidence type="ECO:0000305" key="2"/>
<protein>
    <recommendedName>
        <fullName evidence="1">Large ribosomal subunit protein bL25</fullName>
    </recommendedName>
    <alternativeName>
        <fullName evidence="2">50S ribosomal protein L25</fullName>
    </alternativeName>
</protein>
<gene>
    <name evidence="1" type="primary">rplY</name>
    <name type="ordered locus">YE1422</name>
</gene>
<dbReference type="EMBL" id="AM286415">
    <property type="protein sequence ID" value="CAL11512.1"/>
    <property type="molecule type" value="Genomic_DNA"/>
</dbReference>
<dbReference type="RefSeq" id="WP_005161872.1">
    <property type="nucleotide sequence ID" value="NC_008800.1"/>
</dbReference>
<dbReference type="RefSeq" id="YP_001005730.1">
    <property type="nucleotide sequence ID" value="NC_008800.1"/>
</dbReference>
<dbReference type="SMR" id="A1JLN0"/>
<dbReference type="GeneID" id="31408470"/>
<dbReference type="KEGG" id="yen:YE1422"/>
<dbReference type="PATRIC" id="fig|393305.7.peg.1547"/>
<dbReference type="eggNOG" id="COG1825">
    <property type="taxonomic scope" value="Bacteria"/>
</dbReference>
<dbReference type="HOGENOM" id="CLU_137946_0_0_6"/>
<dbReference type="OrthoDB" id="9806411at2"/>
<dbReference type="Proteomes" id="UP000000642">
    <property type="component" value="Chromosome"/>
</dbReference>
<dbReference type="GO" id="GO:0022625">
    <property type="term" value="C:cytosolic large ribosomal subunit"/>
    <property type="evidence" value="ECO:0007669"/>
    <property type="project" value="TreeGrafter"/>
</dbReference>
<dbReference type="GO" id="GO:0008097">
    <property type="term" value="F:5S rRNA binding"/>
    <property type="evidence" value="ECO:0007669"/>
    <property type="project" value="InterPro"/>
</dbReference>
<dbReference type="GO" id="GO:0003735">
    <property type="term" value="F:structural constituent of ribosome"/>
    <property type="evidence" value="ECO:0007669"/>
    <property type="project" value="InterPro"/>
</dbReference>
<dbReference type="GO" id="GO:0006412">
    <property type="term" value="P:translation"/>
    <property type="evidence" value="ECO:0007669"/>
    <property type="project" value="UniProtKB-UniRule"/>
</dbReference>
<dbReference type="CDD" id="cd00495">
    <property type="entry name" value="Ribosomal_L25_TL5_CTC"/>
    <property type="match status" value="1"/>
</dbReference>
<dbReference type="FunFam" id="2.40.240.10:FF:000002">
    <property type="entry name" value="50S ribosomal protein L25"/>
    <property type="match status" value="1"/>
</dbReference>
<dbReference type="Gene3D" id="2.40.240.10">
    <property type="entry name" value="Ribosomal Protein L25, Chain P"/>
    <property type="match status" value="1"/>
</dbReference>
<dbReference type="HAMAP" id="MF_01336">
    <property type="entry name" value="Ribosomal_bL25"/>
    <property type="match status" value="1"/>
</dbReference>
<dbReference type="InterPro" id="IPR020056">
    <property type="entry name" value="Rbsml_bL25/Gln-tRNA_synth_N"/>
</dbReference>
<dbReference type="InterPro" id="IPR011035">
    <property type="entry name" value="Ribosomal_bL25/Gln-tRNA_synth"/>
</dbReference>
<dbReference type="InterPro" id="IPR020055">
    <property type="entry name" value="Ribosomal_bL25_short"/>
</dbReference>
<dbReference type="InterPro" id="IPR029751">
    <property type="entry name" value="Ribosomal_L25_dom"/>
</dbReference>
<dbReference type="InterPro" id="IPR020930">
    <property type="entry name" value="Ribosomal_uL5_bac-type"/>
</dbReference>
<dbReference type="NCBIfam" id="NF004612">
    <property type="entry name" value="PRK05943.1"/>
    <property type="match status" value="1"/>
</dbReference>
<dbReference type="PANTHER" id="PTHR33284">
    <property type="entry name" value="RIBOSOMAL PROTEIN L25/GLN-TRNA SYNTHETASE, ANTI-CODON-BINDING DOMAIN-CONTAINING PROTEIN"/>
    <property type="match status" value="1"/>
</dbReference>
<dbReference type="PANTHER" id="PTHR33284:SF1">
    <property type="entry name" value="RIBOSOMAL PROTEIN L25_GLN-TRNA SYNTHETASE, ANTI-CODON-BINDING DOMAIN-CONTAINING PROTEIN"/>
    <property type="match status" value="1"/>
</dbReference>
<dbReference type="Pfam" id="PF01386">
    <property type="entry name" value="Ribosomal_L25p"/>
    <property type="match status" value="1"/>
</dbReference>
<dbReference type="SUPFAM" id="SSF50715">
    <property type="entry name" value="Ribosomal protein L25-like"/>
    <property type="match status" value="1"/>
</dbReference>
<sequence>MITIKAEVRNDQGKGASRRLRAANKFPAIIYGGSEAAIAIELDHDTTKNLELKPGFYDNTGLTLVINGKETKVKVQAVQRHAFKPKLTHIDFVRI</sequence>
<name>RL25_YERE8</name>
<keyword id="KW-0687">Ribonucleoprotein</keyword>
<keyword id="KW-0689">Ribosomal protein</keyword>
<keyword id="KW-0694">RNA-binding</keyword>
<keyword id="KW-0699">rRNA-binding</keyword>
<feature type="chain" id="PRO_1000052973" description="Large ribosomal subunit protein bL25">
    <location>
        <begin position="1"/>
        <end position="95"/>
    </location>
</feature>
<organism>
    <name type="scientific">Yersinia enterocolitica serotype O:8 / biotype 1B (strain NCTC 13174 / 8081)</name>
    <dbReference type="NCBI Taxonomy" id="393305"/>
    <lineage>
        <taxon>Bacteria</taxon>
        <taxon>Pseudomonadati</taxon>
        <taxon>Pseudomonadota</taxon>
        <taxon>Gammaproteobacteria</taxon>
        <taxon>Enterobacterales</taxon>
        <taxon>Yersiniaceae</taxon>
        <taxon>Yersinia</taxon>
    </lineage>
</organism>